<organism>
    <name type="scientific">Caenorhabditis elegans</name>
    <dbReference type="NCBI Taxonomy" id="6239"/>
    <lineage>
        <taxon>Eukaryota</taxon>
        <taxon>Metazoa</taxon>
        <taxon>Ecdysozoa</taxon>
        <taxon>Nematoda</taxon>
        <taxon>Chromadorea</taxon>
        <taxon>Rhabditida</taxon>
        <taxon>Rhabditina</taxon>
        <taxon>Rhabditomorpha</taxon>
        <taxon>Rhabditoidea</taxon>
        <taxon>Rhabditidae</taxon>
        <taxon>Peloderinae</taxon>
        <taxon>Caenorhabditis</taxon>
    </lineage>
</organism>
<feature type="signal peptide" evidence="3">
    <location>
        <begin position="1"/>
        <end position="22"/>
    </location>
</feature>
<feature type="chain" id="PRO_0000025495" description="Peptidyl-prolyl cis-trans isomerase 5">
    <location>
        <begin position="23"/>
        <end position="204"/>
    </location>
</feature>
<feature type="domain" description="PPIase cyclophilin-type" evidence="2">
    <location>
        <begin position="32"/>
        <end position="189"/>
    </location>
</feature>
<feature type="glycosylation site" description="N-linked (GlcNAc...) asparagine" evidence="1">
    <location>
        <position position="133"/>
    </location>
</feature>
<feature type="sequence conflict" description="In Ref. 1; AAC47126." evidence="4" ref="1">
    <original>LLVVAAVLAVGALAQ</original>
    <variation>FLLWRPCSLSELLLR</variation>
    <location>
        <begin position="4"/>
        <end position="18"/>
    </location>
</feature>
<feature type="strand" evidence="5">
    <location>
        <begin position="26"/>
        <end position="37"/>
    </location>
</feature>
<feature type="strand" evidence="5">
    <location>
        <begin position="40"/>
        <end position="49"/>
    </location>
</feature>
<feature type="turn" evidence="5">
    <location>
        <begin position="51"/>
        <end position="53"/>
    </location>
</feature>
<feature type="helix" evidence="5">
    <location>
        <begin position="55"/>
        <end position="66"/>
    </location>
</feature>
<feature type="turn" evidence="5">
    <location>
        <begin position="69"/>
        <end position="71"/>
    </location>
</feature>
<feature type="strand" evidence="5">
    <location>
        <begin position="80"/>
        <end position="82"/>
    </location>
</feature>
<feature type="turn" evidence="5">
    <location>
        <begin position="83"/>
        <end position="85"/>
    </location>
</feature>
<feature type="strand" evidence="5">
    <location>
        <begin position="86"/>
        <end position="89"/>
    </location>
</feature>
<feature type="turn" evidence="5">
    <location>
        <begin position="92"/>
        <end position="94"/>
    </location>
</feature>
<feature type="strand" evidence="5">
    <location>
        <begin position="95"/>
        <end position="98"/>
    </location>
</feature>
<feature type="strand" evidence="5">
    <location>
        <begin position="122"/>
        <end position="125"/>
    </location>
</feature>
<feature type="strand" evidence="5">
    <location>
        <begin position="137"/>
        <end position="142"/>
    </location>
</feature>
<feature type="helix" evidence="5">
    <location>
        <begin position="145"/>
        <end position="147"/>
    </location>
</feature>
<feature type="turn" evidence="5">
    <location>
        <begin position="148"/>
        <end position="150"/>
    </location>
</feature>
<feature type="strand" evidence="5">
    <location>
        <begin position="153"/>
        <end position="159"/>
    </location>
</feature>
<feature type="helix" evidence="5">
    <location>
        <begin position="161"/>
        <end position="168"/>
    </location>
</feature>
<feature type="turn" evidence="5">
    <location>
        <begin position="174"/>
        <end position="176"/>
    </location>
</feature>
<feature type="strand" evidence="5">
    <location>
        <begin position="177"/>
        <end position="180"/>
    </location>
</feature>
<feature type="strand" evidence="5">
    <location>
        <begin position="182"/>
        <end position="197"/>
    </location>
</feature>
<keyword id="KW-0002">3D-structure</keyword>
<keyword id="KW-0963">Cytoplasm</keyword>
<keyword id="KW-0903">Direct protein sequencing</keyword>
<keyword id="KW-0325">Glycoprotein</keyword>
<keyword id="KW-0413">Isomerase</keyword>
<keyword id="KW-1185">Reference proteome</keyword>
<keyword id="KW-0697">Rotamase</keyword>
<keyword id="KW-0732">Signal</keyword>
<dbReference type="EC" id="5.2.1.8"/>
<dbReference type="EMBL" id="U31948">
    <property type="protein sequence ID" value="AAC47126.1"/>
    <property type="molecule type" value="mRNA"/>
</dbReference>
<dbReference type="EMBL" id="Z92784">
    <property type="protein sequence ID" value="CAB07192.1"/>
    <property type="molecule type" value="Genomic_DNA"/>
</dbReference>
<dbReference type="PIR" id="T21587">
    <property type="entry name" value="T21587"/>
</dbReference>
<dbReference type="RefSeq" id="NP_001379232.1">
    <property type="nucleotide sequence ID" value="NM_001392982.1"/>
</dbReference>
<dbReference type="RefSeq" id="NP_493624.1">
    <property type="nucleotide sequence ID" value="NM_061223.5"/>
</dbReference>
<dbReference type="PDB" id="1H0P">
    <property type="method" value="X-ray"/>
    <property type="resolution" value="1.75 A"/>
    <property type="chains" value="A=23-204"/>
</dbReference>
<dbReference type="PDBsum" id="1H0P"/>
<dbReference type="SMR" id="P52013"/>
<dbReference type="BioGRID" id="38755">
    <property type="interactions" value="13"/>
</dbReference>
<dbReference type="DIP" id="DIP-24378N"/>
<dbReference type="FunCoup" id="P52013">
    <property type="interactions" value="1977"/>
</dbReference>
<dbReference type="STRING" id="6239.F31C3.1.2"/>
<dbReference type="GlyCosmos" id="P52013">
    <property type="glycosylation" value="1 site, No reported glycans"/>
</dbReference>
<dbReference type="PaxDb" id="6239-F31C3.1"/>
<dbReference type="PeptideAtlas" id="P52013"/>
<dbReference type="EnsemblMetazoa" id="F31C3.1.1">
    <property type="protein sequence ID" value="F31C3.1.1"/>
    <property type="gene ID" value="WBGene00000881"/>
</dbReference>
<dbReference type="GeneID" id="173374"/>
<dbReference type="UCSC" id="F31C3.1.1">
    <property type="organism name" value="c. elegans"/>
</dbReference>
<dbReference type="AGR" id="WB:WBGene00000881"/>
<dbReference type="WormBase" id="F31C3.1">
    <property type="protein sequence ID" value="CE17730"/>
    <property type="gene ID" value="WBGene00000881"/>
    <property type="gene designation" value="cyn-5"/>
</dbReference>
<dbReference type="eggNOG" id="KOG0880">
    <property type="taxonomic scope" value="Eukaryota"/>
</dbReference>
<dbReference type="GeneTree" id="ENSGT00940000167766"/>
<dbReference type="HOGENOM" id="CLU_012062_4_2_1"/>
<dbReference type="InParanoid" id="P52013"/>
<dbReference type="OMA" id="ENHEITH"/>
<dbReference type="OrthoDB" id="193499at2759"/>
<dbReference type="PhylomeDB" id="P52013"/>
<dbReference type="EvolutionaryTrace" id="P52013"/>
<dbReference type="PRO" id="PR:P52013"/>
<dbReference type="Proteomes" id="UP000001940">
    <property type="component" value="Chromosome I"/>
</dbReference>
<dbReference type="Bgee" id="WBGene00000881">
    <property type="expression patterns" value="Expressed in pharyngeal muscle cell (C elegans) and 4 other cell types or tissues"/>
</dbReference>
<dbReference type="GO" id="GO:0005737">
    <property type="term" value="C:cytoplasm"/>
    <property type="evidence" value="ECO:0000314"/>
    <property type="project" value="WormBase"/>
</dbReference>
<dbReference type="GO" id="GO:0043231">
    <property type="term" value="C:intracellular membrane-bounded organelle"/>
    <property type="evidence" value="ECO:0000318"/>
    <property type="project" value="GO_Central"/>
</dbReference>
<dbReference type="GO" id="GO:0016018">
    <property type="term" value="F:cyclosporin A binding"/>
    <property type="evidence" value="ECO:0000318"/>
    <property type="project" value="GO_Central"/>
</dbReference>
<dbReference type="GO" id="GO:0003755">
    <property type="term" value="F:peptidyl-prolyl cis-trans isomerase activity"/>
    <property type="evidence" value="ECO:0000314"/>
    <property type="project" value="WormBase"/>
</dbReference>
<dbReference type="GO" id="GO:0006457">
    <property type="term" value="P:protein folding"/>
    <property type="evidence" value="ECO:0000318"/>
    <property type="project" value="GO_Central"/>
</dbReference>
<dbReference type="FunFam" id="2.40.100.10:FF:000001">
    <property type="entry name" value="Peptidyl-prolyl cis-trans isomerase"/>
    <property type="match status" value="1"/>
</dbReference>
<dbReference type="Gene3D" id="2.40.100.10">
    <property type="entry name" value="Cyclophilin-like"/>
    <property type="match status" value="1"/>
</dbReference>
<dbReference type="InterPro" id="IPR029000">
    <property type="entry name" value="Cyclophilin-like_dom_sf"/>
</dbReference>
<dbReference type="InterPro" id="IPR024936">
    <property type="entry name" value="Cyclophilin-type_PPIase"/>
</dbReference>
<dbReference type="InterPro" id="IPR020892">
    <property type="entry name" value="Cyclophilin-type_PPIase_CS"/>
</dbReference>
<dbReference type="InterPro" id="IPR002130">
    <property type="entry name" value="Cyclophilin-type_PPIase_dom"/>
</dbReference>
<dbReference type="PANTHER" id="PTHR11071">
    <property type="entry name" value="PEPTIDYL-PROLYL CIS-TRANS ISOMERASE"/>
    <property type="match status" value="1"/>
</dbReference>
<dbReference type="PANTHER" id="PTHR11071:SF561">
    <property type="entry name" value="PEPTIDYL-PROLYL CIS-TRANS ISOMERASE D-RELATED"/>
    <property type="match status" value="1"/>
</dbReference>
<dbReference type="Pfam" id="PF00160">
    <property type="entry name" value="Pro_isomerase"/>
    <property type="match status" value="1"/>
</dbReference>
<dbReference type="PIRSF" id="PIRSF001467">
    <property type="entry name" value="Peptidylpro_ismrse"/>
    <property type="match status" value="1"/>
</dbReference>
<dbReference type="PRINTS" id="PR00153">
    <property type="entry name" value="CSAPPISMRASE"/>
</dbReference>
<dbReference type="SUPFAM" id="SSF50891">
    <property type="entry name" value="Cyclophilin-like"/>
    <property type="match status" value="1"/>
</dbReference>
<dbReference type="PROSITE" id="PS00170">
    <property type="entry name" value="CSA_PPIASE_1"/>
    <property type="match status" value="1"/>
</dbReference>
<dbReference type="PROSITE" id="PS50072">
    <property type="entry name" value="CSA_PPIASE_2"/>
    <property type="match status" value="1"/>
</dbReference>
<comment type="function">
    <text>PPIases accelerate the folding of proteins. It catalyzes the cis-trans isomerization of proline imidic peptide bonds in oligopeptides.</text>
</comment>
<comment type="catalytic activity">
    <reaction evidence="3">
        <text>[protein]-peptidylproline (omega=180) = [protein]-peptidylproline (omega=0)</text>
        <dbReference type="Rhea" id="RHEA:16237"/>
        <dbReference type="Rhea" id="RHEA-COMP:10747"/>
        <dbReference type="Rhea" id="RHEA-COMP:10748"/>
        <dbReference type="ChEBI" id="CHEBI:83833"/>
        <dbReference type="ChEBI" id="CHEBI:83834"/>
        <dbReference type="EC" id="5.2.1.8"/>
    </reaction>
</comment>
<comment type="subcellular location">
    <subcellularLocation>
        <location evidence="3">Cytoplasm</location>
    </subcellularLocation>
</comment>
<comment type="tissue specificity">
    <text evidence="3">Embryonic, larval and adult gut cells.</text>
</comment>
<comment type="developmental stage">
    <text evidence="3">Throughout development, highest in embryos.</text>
</comment>
<comment type="induction">
    <text evidence="3">Inhibited by cyclosporin.</text>
</comment>
<comment type="mass spectrometry" mass="20766.0" method="MALDI" evidence="3"/>
<comment type="similarity">
    <text evidence="4">Belongs to the cyclophilin-type PPIase family.</text>
</comment>
<accession>P52013</accession>
<accession>O62190</accession>
<evidence type="ECO:0000255" key="1"/>
<evidence type="ECO:0000255" key="2">
    <source>
        <dbReference type="PROSITE-ProRule" id="PRU00156"/>
    </source>
</evidence>
<evidence type="ECO:0000269" key="3">
    <source>
    </source>
</evidence>
<evidence type="ECO:0000305" key="4"/>
<evidence type="ECO:0007829" key="5">
    <source>
        <dbReference type="PDB" id="1H0P"/>
    </source>
</evidence>
<protein>
    <recommendedName>
        <fullName>Peptidyl-prolyl cis-trans isomerase 5</fullName>
        <shortName>PPIase 5</shortName>
        <ecNumber>5.2.1.8</ecNumber>
    </recommendedName>
    <alternativeName>
        <fullName>Cyclophilin-5</fullName>
    </alternativeName>
    <alternativeName>
        <fullName>Rotamase 5</fullName>
    </alternativeName>
</protein>
<reference key="1">
    <citation type="journal article" date="1996" name="Biochem. J.">
        <title>Cloning and biochemical characterization of the cyclophilin homologues from the free-living nematode Caenorhabditis elegans.</title>
        <authorList>
            <person name="Page A.P."/>
            <person name="Macniven K."/>
            <person name="Hengartner M.O."/>
        </authorList>
    </citation>
    <scope>NUCLEOTIDE SEQUENCE [MRNA]</scope>
    <source>
        <strain>Bristol N2</strain>
    </source>
</reference>
<reference key="2">
    <citation type="journal article" date="1998" name="Science">
        <title>Genome sequence of the nematode C. elegans: a platform for investigating biology.</title>
        <authorList>
            <consortium name="The C. elegans sequencing consortium"/>
        </authorList>
    </citation>
    <scope>NUCLEOTIDE SEQUENCE [LARGE SCALE GENOMIC DNA]</scope>
    <source>
        <strain>Bristol N2</strain>
    </source>
</reference>
<reference key="3">
    <citation type="journal article" date="2002" name="J. Mol. Biol.">
        <title>Structural and biological characterisation of the gut-associated cyclophilin B isoforms from Caenorhabditis elegans.</title>
        <authorList>
            <person name="Picken N.C."/>
            <person name="Eschenlauer S."/>
            <person name="Taylor P."/>
            <person name="Page A.P."/>
            <person name="Walkinshaw M.D."/>
        </authorList>
    </citation>
    <scope>PROTEIN SEQUENCE OF 23-27</scope>
    <scope>X-RAY CRYSTALLOGRAPHY (1.75 ANGSTROMS) OF 23-204</scope>
    <scope>MASS SPECTROMETRY</scope>
    <scope>ENZYME ACTIVITY</scope>
    <scope>SUBCELLULAR LOCATION</scope>
    <scope>INDUCTION</scope>
    <scope>TISSUE SPECIFICITY</scope>
    <scope>DEVELOPMENTAL STAGE</scope>
</reference>
<proteinExistence type="evidence at protein level"/>
<gene>
    <name type="primary">cyn-5</name>
    <name type="synonym">cyp-5</name>
    <name type="ORF">F31C3.1</name>
</gene>
<sequence length="204" mass="21927">MKSLLVVAAVLAVGALAQGDDAKGPKVTDKVYFDMEIGGKPIGRIVIGLFGKTVPKTATNFIELAKKPKGEGYPGSKFHRVIADFMIQGGDFTRGDGTGGRSIYGEKFADENFKLKHYGAGWLSMANAGADTNGSQFFITTVKTPWLDGRHVVFGKILEGMDVVRKIEQTEKLPGDRPKQDVIIAASGHIAVDTPFSVEREAVV</sequence>
<name>CYP5_CAEEL</name>